<organism>
    <name type="scientific">Chlamydia caviae (strain ATCC VR-813 / DSM 19441 / 03DC25 / GPIC)</name>
    <name type="common">Chlamydophila caviae</name>
    <dbReference type="NCBI Taxonomy" id="227941"/>
    <lineage>
        <taxon>Bacteria</taxon>
        <taxon>Pseudomonadati</taxon>
        <taxon>Chlamydiota</taxon>
        <taxon>Chlamydiia</taxon>
        <taxon>Chlamydiales</taxon>
        <taxon>Chlamydiaceae</taxon>
        <taxon>Chlamydia/Chlamydophila group</taxon>
        <taxon>Chlamydia</taxon>
    </lineage>
</organism>
<evidence type="ECO:0000255" key="1">
    <source>
        <dbReference type="HAMAP-Rule" id="MF_00651"/>
    </source>
</evidence>
<reference key="1">
    <citation type="journal article" date="2003" name="Nucleic Acids Res.">
        <title>Genome sequence of Chlamydophila caviae (Chlamydia psittaci GPIC): examining the role of niche-specific genes in the evolution of the Chlamydiaceae.</title>
        <authorList>
            <person name="Read T.D."/>
            <person name="Myers G.S.A."/>
            <person name="Brunham R.C."/>
            <person name="Nelson W.C."/>
            <person name="Paulsen I.T."/>
            <person name="Heidelberg J.F."/>
            <person name="Holtzapple E.K."/>
            <person name="Khouri H.M."/>
            <person name="Federova N.B."/>
            <person name="Carty H.A."/>
            <person name="Umayam L.A."/>
            <person name="Haft D.H."/>
            <person name="Peterson J.D."/>
            <person name="Beanan M.J."/>
            <person name="White O."/>
            <person name="Salzberg S.L."/>
            <person name="Hsia R.-C."/>
            <person name="McClarty G."/>
            <person name="Rank R.G."/>
            <person name="Bavoil P.M."/>
            <person name="Fraser C.M."/>
        </authorList>
    </citation>
    <scope>NUCLEOTIDE SEQUENCE [LARGE SCALE GENOMIC DNA]</scope>
    <source>
        <strain>ATCC VR-813 / DSM 19441 / 03DC25 / GPIC</strain>
    </source>
</reference>
<protein>
    <recommendedName>
        <fullName evidence="1">Putative pre-16S rRNA nuclease</fullName>
        <ecNumber evidence="1">3.1.-.-</ecNumber>
    </recommendedName>
</protein>
<name>YQGF_CHLCV</name>
<sequence length="163" mass="17864">MSNPKNKKEKTFLGIDYGQRRIGLAYAASPLFISLPIGCIEAGNTVEATAKILFNIIQERSVSCVVLGNPIPMQKGQKSALQEEITKLSSLIQESCGVEVILWDERLSSAQAERMLKGDCGLSRKKRKGKTDTIAATLILTSFLESSPPKIFLKKTCPKPPVR</sequence>
<accession>Q822T1</accession>
<proteinExistence type="inferred from homology"/>
<feature type="chain" id="PRO_0000172043" description="Putative pre-16S rRNA nuclease">
    <location>
        <begin position="1"/>
        <end position="163"/>
    </location>
</feature>
<keyword id="KW-0963">Cytoplasm</keyword>
<keyword id="KW-0378">Hydrolase</keyword>
<keyword id="KW-0540">Nuclease</keyword>
<keyword id="KW-0690">Ribosome biogenesis</keyword>
<gene>
    <name type="ordered locus">CCA_00598</name>
</gene>
<comment type="function">
    <text evidence="1">Could be a nuclease involved in processing of the 5'-end of pre-16S rRNA.</text>
</comment>
<comment type="subcellular location">
    <subcellularLocation>
        <location evidence="1">Cytoplasm</location>
    </subcellularLocation>
</comment>
<comment type="similarity">
    <text evidence="1">Belongs to the YqgF nuclease family.</text>
</comment>
<dbReference type="EC" id="3.1.-.-" evidence="1"/>
<dbReference type="EMBL" id="AE015925">
    <property type="protein sequence ID" value="AAP05340.1"/>
    <property type="molecule type" value="Genomic_DNA"/>
</dbReference>
<dbReference type="RefSeq" id="WP_011006555.1">
    <property type="nucleotide sequence ID" value="NC_003361.3"/>
</dbReference>
<dbReference type="SMR" id="Q822T1"/>
<dbReference type="STRING" id="227941.CCA_00598"/>
<dbReference type="KEGG" id="cca:CCA_00598"/>
<dbReference type="eggNOG" id="COG0816">
    <property type="taxonomic scope" value="Bacteria"/>
</dbReference>
<dbReference type="HOGENOM" id="CLU_098240_1_1_0"/>
<dbReference type="OrthoDB" id="9796140at2"/>
<dbReference type="Proteomes" id="UP000002193">
    <property type="component" value="Chromosome"/>
</dbReference>
<dbReference type="GO" id="GO:0005829">
    <property type="term" value="C:cytosol"/>
    <property type="evidence" value="ECO:0007669"/>
    <property type="project" value="TreeGrafter"/>
</dbReference>
<dbReference type="GO" id="GO:0004518">
    <property type="term" value="F:nuclease activity"/>
    <property type="evidence" value="ECO:0007669"/>
    <property type="project" value="UniProtKB-KW"/>
</dbReference>
<dbReference type="GO" id="GO:0000967">
    <property type="term" value="P:rRNA 5'-end processing"/>
    <property type="evidence" value="ECO:0007669"/>
    <property type="project" value="UniProtKB-UniRule"/>
</dbReference>
<dbReference type="CDD" id="cd16964">
    <property type="entry name" value="YqgF"/>
    <property type="match status" value="1"/>
</dbReference>
<dbReference type="Gene3D" id="3.30.420.140">
    <property type="entry name" value="YqgF/RNase H-like domain"/>
    <property type="match status" value="1"/>
</dbReference>
<dbReference type="HAMAP" id="MF_00651">
    <property type="entry name" value="Nuclease_YqgF"/>
    <property type="match status" value="1"/>
</dbReference>
<dbReference type="InterPro" id="IPR012337">
    <property type="entry name" value="RNaseH-like_sf"/>
</dbReference>
<dbReference type="InterPro" id="IPR005227">
    <property type="entry name" value="YqgF"/>
</dbReference>
<dbReference type="InterPro" id="IPR006641">
    <property type="entry name" value="YqgF/RNaseH-like_dom"/>
</dbReference>
<dbReference type="InterPro" id="IPR037027">
    <property type="entry name" value="YqgF/RNaseH-like_dom_sf"/>
</dbReference>
<dbReference type="NCBIfam" id="TIGR00250">
    <property type="entry name" value="RNAse_H_YqgF"/>
    <property type="match status" value="1"/>
</dbReference>
<dbReference type="PANTHER" id="PTHR33317">
    <property type="entry name" value="POLYNUCLEOTIDYL TRANSFERASE, RIBONUCLEASE H-LIKE SUPERFAMILY PROTEIN"/>
    <property type="match status" value="1"/>
</dbReference>
<dbReference type="PANTHER" id="PTHR33317:SF4">
    <property type="entry name" value="POLYNUCLEOTIDYL TRANSFERASE, RIBONUCLEASE H-LIKE SUPERFAMILY PROTEIN"/>
    <property type="match status" value="1"/>
</dbReference>
<dbReference type="Pfam" id="PF03652">
    <property type="entry name" value="RuvX"/>
    <property type="match status" value="1"/>
</dbReference>
<dbReference type="SMART" id="SM00732">
    <property type="entry name" value="YqgFc"/>
    <property type="match status" value="1"/>
</dbReference>
<dbReference type="SUPFAM" id="SSF53098">
    <property type="entry name" value="Ribonuclease H-like"/>
    <property type="match status" value="1"/>
</dbReference>